<name>RUVB_AMOA5</name>
<dbReference type="EC" id="3.6.4.-" evidence="1"/>
<dbReference type="EMBL" id="CP001102">
    <property type="protein sequence ID" value="ACE05736.1"/>
    <property type="molecule type" value="Genomic_DNA"/>
</dbReference>
<dbReference type="RefSeq" id="WP_012472499.1">
    <property type="nucleotide sequence ID" value="NC_010830.1"/>
</dbReference>
<dbReference type="SMR" id="B3ER84"/>
<dbReference type="STRING" id="452471.Aasi_0299"/>
<dbReference type="KEGG" id="aas:Aasi_0299"/>
<dbReference type="eggNOG" id="COG2255">
    <property type="taxonomic scope" value="Bacteria"/>
</dbReference>
<dbReference type="HOGENOM" id="CLU_055599_1_0_10"/>
<dbReference type="OrthoDB" id="9804478at2"/>
<dbReference type="Proteomes" id="UP000001227">
    <property type="component" value="Chromosome"/>
</dbReference>
<dbReference type="GO" id="GO:0005737">
    <property type="term" value="C:cytoplasm"/>
    <property type="evidence" value="ECO:0007669"/>
    <property type="project" value="UniProtKB-SubCell"/>
</dbReference>
<dbReference type="GO" id="GO:0048476">
    <property type="term" value="C:Holliday junction resolvase complex"/>
    <property type="evidence" value="ECO:0007669"/>
    <property type="project" value="UniProtKB-UniRule"/>
</dbReference>
<dbReference type="GO" id="GO:0005524">
    <property type="term" value="F:ATP binding"/>
    <property type="evidence" value="ECO:0007669"/>
    <property type="project" value="UniProtKB-UniRule"/>
</dbReference>
<dbReference type="GO" id="GO:0016887">
    <property type="term" value="F:ATP hydrolysis activity"/>
    <property type="evidence" value="ECO:0007669"/>
    <property type="project" value="InterPro"/>
</dbReference>
<dbReference type="GO" id="GO:0000400">
    <property type="term" value="F:four-way junction DNA binding"/>
    <property type="evidence" value="ECO:0007669"/>
    <property type="project" value="UniProtKB-UniRule"/>
</dbReference>
<dbReference type="GO" id="GO:0009378">
    <property type="term" value="F:four-way junction helicase activity"/>
    <property type="evidence" value="ECO:0007669"/>
    <property type="project" value="InterPro"/>
</dbReference>
<dbReference type="GO" id="GO:0006310">
    <property type="term" value="P:DNA recombination"/>
    <property type="evidence" value="ECO:0007669"/>
    <property type="project" value="UniProtKB-UniRule"/>
</dbReference>
<dbReference type="GO" id="GO:0006281">
    <property type="term" value="P:DNA repair"/>
    <property type="evidence" value="ECO:0007669"/>
    <property type="project" value="UniProtKB-UniRule"/>
</dbReference>
<dbReference type="CDD" id="cd00009">
    <property type="entry name" value="AAA"/>
    <property type="match status" value="1"/>
</dbReference>
<dbReference type="Gene3D" id="1.10.8.60">
    <property type="match status" value="1"/>
</dbReference>
<dbReference type="Gene3D" id="3.40.50.300">
    <property type="entry name" value="P-loop containing nucleotide triphosphate hydrolases"/>
    <property type="match status" value="1"/>
</dbReference>
<dbReference type="Gene3D" id="1.10.10.10">
    <property type="entry name" value="Winged helix-like DNA-binding domain superfamily/Winged helix DNA-binding domain"/>
    <property type="match status" value="1"/>
</dbReference>
<dbReference type="HAMAP" id="MF_00016">
    <property type="entry name" value="DNA_HJ_migration_RuvB"/>
    <property type="match status" value="1"/>
</dbReference>
<dbReference type="InterPro" id="IPR003593">
    <property type="entry name" value="AAA+_ATPase"/>
</dbReference>
<dbReference type="InterPro" id="IPR041445">
    <property type="entry name" value="AAA_lid_4"/>
</dbReference>
<dbReference type="InterPro" id="IPR004605">
    <property type="entry name" value="DNA_helicase_Holl-junc_RuvB"/>
</dbReference>
<dbReference type="InterPro" id="IPR027417">
    <property type="entry name" value="P-loop_NTPase"/>
</dbReference>
<dbReference type="InterPro" id="IPR008824">
    <property type="entry name" value="RuvB-like_N"/>
</dbReference>
<dbReference type="InterPro" id="IPR008823">
    <property type="entry name" value="RuvB_C"/>
</dbReference>
<dbReference type="InterPro" id="IPR036388">
    <property type="entry name" value="WH-like_DNA-bd_sf"/>
</dbReference>
<dbReference type="InterPro" id="IPR036390">
    <property type="entry name" value="WH_DNA-bd_sf"/>
</dbReference>
<dbReference type="NCBIfam" id="NF000868">
    <property type="entry name" value="PRK00080.1"/>
    <property type="match status" value="1"/>
</dbReference>
<dbReference type="NCBIfam" id="TIGR00635">
    <property type="entry name" value="ruvB"/>
    <property type="match status" value="1"/>
</dbReference>
<dbReference type="PANTHER" id="PTHR42848">
    <property type="match status" value="1"/>
</dbReference>
<dbReference type="PANTHER" id="PTHR42848:SF1">
    <property type="entry name" value="HOLLIDAY JUNCTION BRANCH MIGRATION COMPLEX SUBUNIT RUVB"/>
    <property type="match status" value="1"/>
</dbReference>
<dbReference type="Pfam" id="PF17864">
    <property type="entry name" value="AAA_lid_4"/>
    <property type="match status" value="1"/>
</dbReference>
<dbReference type="Pfam" id="PF05491">
    <property type="entry name" value="RuvB_C"/>
    <property type="match status" value="1"/>
</dbReference>
<dbReference type="Pfam" id="PF05496">
    <property type="entry name" value="RuvB_N"/>
    <property type="match status" value="1"/>
</dbReference>
<dbReference type="SMART" id="SM00382">
    <property type="entry name" value="AAA"/>
    <property type="match status" value="1"/>
</dbReference>
<dbReference type="SUPFAM" id="SSF52540">
    <property type="entry name" value="P-loop containing nucleoside triphosphate hydrolases"/>
    <property type="match status" value="1"/>
</dbReference>
<dbReference type="SUPFAM" id="SSF46785">
    <property type="entry name" value="Winged helix' DNA-binding domain"/>
    <property type="match status" value="1"/>
</dbReference>
<keyword id="KW-0067">ATP-binding</keyword>
<keyword id="KW-0963">Cytoplasm</keyword>
<keyword id="KW-0227">DNA damage</keyword>
<keyword id="KW-0233">DNA recombination</keyword>
<keyword id="KW-0234">DNA repair</keyword>
<keyword id="KW-0238">DNA-binding</keyword>
<keyword id="KW-0378">Hydrolase</keyword>
<keyword id="KW-0547">Nucleotide-binding</keyword>
<keyword id="KW-1185">Reference proteome</keyword>
<accession>B3ER84</accession>
<reference key="1">
    <citation type="journal article" date="2010" name="J. Bacteriol.">
        <title>The genome of the amoeba symbiont 'Candidatus Amoebophilus asiaticus' reveals common mechanisms for host cell interaction among amoeba-associated bacteria.</title>
        <authorList>
            <person name="Schmitz-Esser S."/>
            <person name="Tischler P."/>
            <person name="Arnold R."/>
            <person name="Montanaro J."/>
            <person name="Wagner M."/>
            <person name="Rattei T."/>
            <person name="Horn M."/>
        </authorList>
    </citation>
    <scope>NUCLEOTIDE SEQUENCE [LARGE SCALE GENOMIC DNA]</scope>
    <source>
        <strain>5a2</strain>
    </source>
</reference>
<feature type="chain" id="PRO_1000089615" description="Holliday junction branch migration complex subunit RuvB">
    <location>
        <begin position="1"/>
        <end position="342"/>
    </location>
</feature>
<feature type="region of interest" description="Large ATPase domain (RuvB-L)" evidence="1">
    <location>
        <begin position="1"/>
        <end position="185"/>
    </location>
</feature>
<feature type="region of interest" description="Small ATPAse domain (RuvB-S)" evidence="1">
    <location>
        <begin position="186"/>
        <end position="256"/>
    </location>
</feature>
<feature type="region of interest" description="Head domain (RuvB-H)" evidence="1">
    <location>
        <begin position="259"/>
        <end position="342"/>
    </location>
</feature>
<feature type="binding site" evidence="1">
    <location>
        <position position="24"/>
    </location>
    <ligand>
        <name>ATP</name>
        <dbReference type="ChEBI" id="CHEBI:30616"/>
    </ligand>
</feature>
<feature type="binding site" evidence="1">
    <location>
        <position position="25"/>
    </location>
    <ligand>
        <name>ATP</name>
        <dbReference type="ChEBI" id="CHEBI:30616"/>
    </ligand>
</feature>
<feature type="binding site" evidence="1">
    <location>
        <position position="66"/>
    </location>
    <ligand>
        <name>ATP</name>
        <dbReference type="ChEBI" id="CHEBI:30616"/>
    </ligand>
</feature>
<feature type="binding site" evidence="1">
    <location>
        <position position="69"/>
    </location>
    <ligand>
        <name>ATP</name>
        <dbReference type="ChEBI" id="CHEBI:30616"/>
    </ligand>
</feature>
<feature type="binding site" evidence="1">
    <location>
        <position position="70"/>
    </location>
    <ligand>
        <name>ATP</name>
        <dbReference type="ChEBI" id="CHEBI:30616"/>
    </ligand>
</feature>
<feature type="binding site" evidence="1">
    <location>
        <position position="70"/>
    </location>
    <ligand>
        <name>Mg(2+)</name>
        <dbReference type="ChEBI" id="CHEBI:18420"/>
    </ligand>
</feature>
<feature type="binding site" evidence="1">
    <location>
        <position position="71"/>
    </location>
    <ligand>
        <name>ATP</name>
        <dbReference type="ChEBI" id="CHEBI:30616"/>
    </ligand>
</feature>
<feature type="binding site" evidence="1">
    <location>
        <begin position="132"/>
        <end position="134"/>
    </location>
    <ligand>
        <name>ATP</name>
        <dbReference type="ChEBI" id="CHEBI:30616"/>
    </ligand>
</feature>
<feature type="binding site" evidence="1">
    <location>
        <position position="175"/>
    </location>
    <ligand>
        <name>ATP</name>
        <dbReference type="ChEBI" id="CHEBI:30616"/>
    </ligand>
</feature>
<feature type="binding site" evidence="1">
    <location>
        <position position="185"/>
    </location>
    <ligand>
        <name>ATP</name>
        <dbReference type="ChEBI" id="CHEBI:30616"/>
    </ligand>
</feature>
<feature type="binding site" evidence="1">
    <location>
        <position position="222"/>
    </location>
    <ligand>
        <name>ATP</name>
        <dbReference type="ChEBI" id="CHEBI:30616"/>
    </ligand>
</feature>
<feature type="binding site" evidence="1">
    <location>
        <position position="314"/>
    </location>
    <ligand>
        <name>DNA</name>
        <dbReference type="ChEBI" id="CHEBI:16991"/>
    </ligand>
</feature>
<feature type="binding site" evidence="1">
    <location>
        <position position="319"/>
    </location>
    <ligand>
        <name>DNA</name>
        <dbReference type="ChEBI" id="CHEBI:16991"/>
    </ligand>
</feature>
<proteinExistence type="inferred from homology"/>
<comment type="function">
    <text evidence="1">The RuvA-RuvB-RuvC complex processes Holliday junction (HJ) DNA during genetic recombination and DNA repair, while the RuvA-RuvB complex plays an important role in the rescue of blocked DNA replication forks via replication fork reversal (RFR). RuvA specifically binds to HJ cruciform DNA, conferring on it an open structure. The RuvB hexamer acts as an ATP-dependent pump, pulling dsDNA into and through the RuvAB complex. RuvB forms 2 homohexamers on either side of HJ DNA bound by 1 or 2 RuvA tetramers; 4 subunits per hexamer contact DNA at a time. Coordinated motions by a converter formed by DNA-disengaged RuvB subunits stimulates ATP hydrolysis and nucleotide exchange. Immobilization of the converter enables RuvB to convert the ATP-contained energy into a lever motion, pulling 2 nucleotides of DNA out of the RuvA tetramer per ATP hydrolyzed, thus driving DNA branch migration. The RuvB motors rotate together with the DNA substrate, which together with the progressing nucleotide cycle form the mechanistic basis for DNA recombination by continuous HJ branch migration. Branch migration allows RuvC to scan DNA until it finds its consensus sequence, where it cleaves and resolves cruciform DNA.</text>
</comment>
<comment type="catalytic activity">
    <reaction evidence="1">
        <text>ATP + H2O = ADP + phosphate + H(+)</text>
        <dbReference type="Rhea" id="RHEA:13065"/>
        <dbReference type="ChEBI" id="CHEBI:15377"/>
        <dbReference type="ChEBI" id="CHEBI:15378"/>
        <dbReference type="ChEBI" id="CHEBI:30616"/>
        <dbReference type="ChEBI" id="CHEBI:43474"/>
        <dbReference type="ChEBI" id="CHEBI:456216"/>
    </reaction>
</comment>
<comment type="subunit">
    <text evidence="1">Homohexamer. Forms an RuvA(8)-RuvB(12)-Holliday junction (HJ) complex. HJ DNA is sandwiched between 2 RuvA tetramers; dsDNA enters through RuvA and exits via RuvB. An RuvB hexamer assembles on each DNA strand where it exits the tetramer. Each RuvB hexamer is contacted by two RuvA subunits (via domain III) on 2 adjacent RuvB subunits; this complex drives branch migration. In the full resolvosome a probable DNA-RuvA(4)-RuvB(12)-RuvC(2) complex forms which resolves the HJ.</text>
</comment>
<comment type="subcellular location">
    <subcellularLocation>
        <location evidence="1">Cytoplasm</location>
    </subcellularLocation>
</comment>
<comment type="domain">
    <text evidence="1">Has 3 domains, the large (RuvB-L) and small ATPase (RuvB-S) domains and the C-terminal head (RuvB-H) domain. The head domain binds DNA, while the ATPase domains jointly bind ATP, ADP or are empty depending on the state of the subunit in the translocation cycle. During a single DNA translocation step the structure of each domain remains the same, but their relative positions change.</text>
</comment>
<comment type="similarity">
    <text evidence="1">Belongs to the RuvB family.</text>
</comment>
<gene>
    <name evidence="1" type="primary">ruvB</name>
    <name type="ordered locus">Aasi_0299</name>
</gene>
<organism>
    <name type="scientific">Amoebophilus asiaticus (strain 5a2)</name>
    <dbReference type="NCBI Taxonomy" id="452471"/>
    <lineage>
        <taxon>Bacteria</taxon>
        <taxon>Pseudomonadati</taxon>
        <taxon>Bacteroidota</taxon>
        <taxon>Cytophagia</taxon>
        <taxon>Cytophagales</taxon>
        <taxon>Amoebophilaceae</taxon>
        <taxon>Candidatus Amoebophilus</taxon>
    </lineage>
</organism>
<protein>
    <recommendedName>
        <fullName evidence="1">Holliday junction branch migration complex subunit RuvB</fullName>
        <ecNumber evidence="1">3.6.4.-</ecNumber>
    </recommendedName>
</protein>
<sequence>MRKDYLNSNKDSLSAPEKEIERALRPHVFADFTGQEKIVANLKIFVQAAKERKEPLDHVLLHGPPGLGKTTLAHIIANELGANIRITSGPVLDKPGDLAGLLTNLGPYDVLFIDEIHRLNPIVEEYLYTAMEDFKIDIMLDSGPSARSVQLNLNPFTLIGATTRSGLLTSPLRARFGINTRLAYYDVTLLTQIVKRSSQILNVPIEESAAYELARRSRGTPRIANTLLRRTRDFAQITGSGTITQQIAQMALKALDVDEDGLDEMDNRILSTIIEKFHGGPVGISTIATACSEESETIEEVYEPFLIQEGYLHRTPRGREATPKAYKHLKLAPPQRAGTLFE</sequence>
<evidence type="ECO:0000255" key="1">
    <source>
        <dbReference type="HAMAP-Rule" id="MF_00016"/>
    </source>
</evidence>